<protein>
    <recommendedName>
        <fullName evidence="1">Glucosamine-6-phosphate deaminase</fullName>
        <ecNumber evidence="1">3.5.99.6</ecNumber>
    </recommendedName>
    <alternativeName>
        <fullName evidence="1">GlcN6P deaminase</fullName>
        <shortName evidence="1">GNPDA</shortName>
    </alternativeName>
    <alternativeName>
        <fullName evidence="1">Glucosamine-6-phosphate isomerase</fullName>
    </alternativeName>
</protein>
<organism>
    <name type="scientific">Clostridium botulinum (strain Kyoto / Type A2)</name>
    <dbReference type="NCBI Taxonomy" id="536232"/>
    <lineage>
        <taxon>Bacteria</taxon>
        <taxon>Bacillati</taxon>
        <taxon>Bacillota</taxon>
        <taxon>Clostridia</taxon>
        <taxon>Eubacteriales</taxon>
        <taxon>Clostridiaceae</taxon>
        <taxon>Clostridium</taxon>
    </lineage>
</organism>
<comment type="function">
    <text evidence="1">Catalyzes the reversible isomerization-deamination of glucosamine 6-phosphate (GlcN6P) to form fructose 6-phosphate (Fru6P) and ammonium ion.</text>
</comment>
<comment type="catalytic activity">
    <reaction evidence="1">
        <text>alpha-D-glucosamine 6-phosphate + H2O = beta-D-fructose 6-phosphate + NH4(+)</text>
        <dbReference type="Rhea" id="RHEA:12172"/>
        <dbReference type="ChEBI" id="CHEBI:15377"/>
        <dbReference type="ChEBI" id="CHEBI:28938"/>
        <dbReference type="ChEBI" id="CHEBI:57634"/>
        <dbReference type="ChEBI" id="CHEBI:75989"/>
        <dbReference type="EC" id="3.5.99.6"/>
    </reaction>
</comment>
<comment type="pathway">
    <text evidence="1">Amino-sugar metabolism; N-acetylneuraminate degradation; D-fructose 6-phosphate from N-acetylneuraminate: step 5/5.</text>
</comment>
<comment type="similarity">
    <text evidence="1">Belongs to the glucosamine/galactosamine-6-phosphate isomerase family. NagB subfamily.</text>
</comment>
<feature type="chain" id="PRO_1000165015" description="Glucosamine-6-phosphate deaminase">
    <location>
        <begin position="1"/>
        <end position="244"/>
    </location>
</feature>
<feature type="active site" description="Proton acceptor; for enolization step" evidence="1">
    <location>
        <position position="67"/>
    </location>
</feature>
<feature type="active site" description="For ring-opening step" evidence="1">
    <location>
        <position position="136"/>
    </location>
</feature>
<feature type="active site" description="Proton acceptor; for ring-opening step" evidence="1">
    <location>
        <position position="138"/>
    </location>
</feature>
<feature type="active site" description="For ring-opening step" evidence="1">
    <location>
        <position position="143"/>
    </location>
</feature>
<name>NAGB_CLOBJ</name>
<sequence>MRIIVVDNYEEMSKKAAAMMASQVILKPDSVLGLATGDTPIGMYREIINIYKNQKMDFSKVKTFNLDEYYGLNRGNPQSYYYYMMNNLFNYVNIDKNNINIPNGMADNIEVECKEYERKIDKAGGIDLQILGIGVNGHIGFNEPNISFESETHLVNLNEKTIESNSRFFSSKEEVPTKAISMGIKSIIHSKKIILLACGSAKSDAVSKAINGKITPNIPASILQLHRDVVVIIDKEAASKLNLK</sequence>
<reference key="1">
    <citation type="submission" date="2008-10" db="EMBL/GenBank/DDBJ databases">
        <title>Genome sequence of Clostridium botulinum A2 Kyoto.</title>
        <authorList>
            <person name="Shrivastava S."/>
            <person name="Brinkac L.M."/>
            <person name="Brown J.L."/>
            <person name="Bruce D."/>
            <person name="Detter C.C."/>
            <person name="Johnson E.A."/>
            <person name="Munk C.A."/>
            <person name="Smith L.A."/>
            <person name="Smith T.J."/>
            <person name="Sutton G."/>
            <person name="Brettin T.S."/>
        </authorList>
    </citation>
    <scope>NUCLEOTIDE SEQUENCE [LARGE SCALE GENOMIC DNA]</scope>
    <source>
        <strain>Kyoto / Type A2</strain>
    </source>
</reference>
<proteinExistence type="inferred from homology"/>
<keyword id="KW-0119">Carbohydrate metabolism</keyword>
<keyword id="KW-0378">Hydrolase</keyword>
<gene>
    <name evidence="1" type="primary">nagB</name>
    <name type="ordered locus">CLM_3197</name>
</gene>
<accession>C1FV12</accession>
<dbReference type="EC" id="3.5.99.6" evidence="1"/>
<dbReference type="EMBL" id="CP001581">
    <property type="protein sequence ID" value="ACO84598.1"/>
    <property type="molecule type" value="Genomic_DNA"/>
</dbReference>
<dbReference type="RefSeq" id="WP_003357727.1">
    <property type="nucleotide sequence ID" value="NC_012563.1"/>
</dbReference>
<dbReference type="SMR" id="C1FV12"/>
<dbReference type="KEGG" id="cby:CLM_3197"/>
<dbReference type="eggNOG" id="COG0363">
    <property type="taxonomic scope" value="Bacteria"/>
</dbReference>
<dbReference type="HOGENOM" id="CLU_049611_1_1_9"/>
<dbReference type="UniPathway" id="UPA00629">
    <property type="reaction ID" value="UER00684"/>
</dbReference>
<dbReference type="Proteomes" id="UP000001374">
    <property type="component" value="Chromosome"/>
</dbReference>
<dbReference type="GO" id="GO:0005737">
    <property type="term" value="C:cytoplasm"/>
    <property type="evidence" value="ECO:0007669"/>
    <property type="project" value="TreeGrafter"/>
</dbReference>
<dbReference type="GO" id="GO:0004342">
    <property type="term" value="F:glucosamine-6-phosphate deaminase activity"/>
    <property type="evidence" value="ECO:0007669"/>
    <property type="project" value="UniProtKB-UniRule"/>
</dbReference>
<dbReference type="GO" id="GO:0042802">
    <property type="term" value="F:identical protein binding"/>
    <property type="evidence" value="ECO:0007669"/>
    <property type="project" value="TreeGrafter"/>
</dbReference>
<dbReference type="GO" id="GO:0005975">
    <property type="term" value="P:carbohydrate metabolic process"/>
    <property type="evidence" value="ECO:0007669"/>
    <property type="project" value="InterPro"/>
</dbReference>
<dbReference type="GO" id="GO:0006043">
    <property type="term" value="P:glucosamine catabolic process"/>
    <property type="evidence" value="ECO:0007669"/>
    <property type="project" value="TreeGrafter"/>
</dbReference>
<dbReference type="GO" id="GO:0006046">
    <property type="term" value="P:N-acetylglucosamine catabolic process"/>
    <property type="evidence" value="ECO:0007669"/>
    <property type="project" value="TreeGrafter"/>
</dbReference>
<dbReference type="GO" id="GO:0019262">
    <property type="term" value="P:N-acetylneuraminate catabolic process"/>
    <property type="evidence" value="ECO:0007669"/>
    <property type="project" value="UniProtKB-UniRule"/>
</dbReference>
<dbReference type="CDD" id="cd01399">
    <property type="entry name" value="GlcN6P_deaminase"/>
    <property type="match status" value="1"/>
</dbReference>
<dbReference type="FunFam" id="3.40.50.1360:FF:000003">
    <property type="entry name" value="Glucosamine-6-phosphate deaminase"/>
    <property type="match status" value="1"/>
</dbReference>
<dbReference type="Gene3D" id="3.40.50.1360">
    <property type="match status" value="1"/>
</dbReference>
<dbReference type="HAMAP" id="MF_01241">
    <property type="entry name" value="GlcN6P_deamin"/>
    <property type="match status" value="1"/>
</dbReference>
<dbReference type="InterPro" id="IPR006148">
    <property type="entry name" value="Glc/Gal-6P_isomerase"/>
</dbReference>
<dbReference type="InterPro" id="IPR004547">
    <property type="entry name" value="Glucosamine6P_isomerase"/>
</dbReference>
<dbReference type="InterPro" id="IPR018321">
    <property type="entry name" value="Glucosamine6P_isomerase_CS"/>
</dbReference>
<dbReference type="InterPro" id="IPR037171">
    <property type="entry name" value="NagB/RpiA_transferase-like"/>
</dbReference>
<dbReference type="NCBIfam" id="TIGR00502">
    <property type="entry name" value="nagB"/>
    <property type="match status" value="1"/>
</dbReference>
<dbReference type="NCBIfam" id="NF001684">
    <property type="entry name" value="PRK00443.1-4"/>
    <property type="match status" value="1"/>
</dbReference>
<dbReference type="PANTHER" id="PTHR11280">
    <property type="entry name" value="GLUCOSAMINE-6-PHOSPHATE ISOMERASE"/>
    <property type="match status" value="1"/>
</dbReference>
<dbReference type="PANTHER" id="PTHR11280:SF5">
    <property type="entry name" value="GLUCOSAMINE-6-PHOSPHATE ISOMERASE"/>
    <property type="match status" value="1"/>
</dbReference>
<dbReference type="Pfam" id="PF01182">
    <property type="entry name" value="Glucosamine_iso"/>
    <property type="match status" value="1"/>
</dbReference>
<dbReference type="SUPFAM" id="SSF100950">
    <property type="entry name" value="NagB/RpiA/CoA transferase-like"/>
    <property type="match status" value="1"/>
</dbReference>
<dbReference type="PROSITE" id="PS01161">
    <property type="entry name" value="GLC_GALNAC_ISOMERASE"/>
    <property type="match status" value="1"/>
</dbReference>
<evidence type="ECO:0000255" key="1">
    <source>
        <dbReference type="HAMAP-Rule" id="MF_01241"/>
    </source>
</evidence>